<dbReference type="EC" id="7.1.1.-" evidence="1"/>
<dbReference type="EMBL" id="CP000524">
    <property type="protein sequence ID" value="ABM44810.1"/>
    <property type="molecule type" value="Genomic_DNA"/>
</dbReference>
<dbReference type="RefSeq" id="WP_005767062.1">
    <property type="nucleotide sequence ID" value="NC_008783.1"/>
</dbReference>
<dbReference type="SMR" id="A1USW8"/>
<dbReference type="STRING" id="360095.BARBAKC583_0779"/>
<dbReference type="GeneID" id="4685033"/>
<dbReference type="KEGG" id="bbk:BARBAKC583_0779"/>
<dbReference type="PATRIC" id="fig|360095.6.peg.752"/>
<dbReference type="eggNOG" id="COG0377">
    <property type="taxonomic scope" value="Bacteria"/>
</dbReference>
<dbReference type="HOGENOM" id="CLU_055737_7_3_5"/>
<dbReference type="OrthoDB" id="9786737at2"/>
<dbReference type="Proteomes" id="UP000000643">
    <property type="component" value="Chromosome"/>
</dbReference>
<dbReference type="GO" id="GO:0005886">
    <property type="term" value="C:plasma membrane"/>
    <property type="evidence" value="ECO:0007669"/>
    <property type="project" value="UniProtKB-SubCell"/>
</dbReference>
<dbReference type="GO" id="GO:0045271">
    <property type="term" value="C:respiratory chain complex I"/>
    <property type="evidence" value="ECO:0007669"/>
    <property type="project" value="TreeGrafter"/>
</dbReference>
<dbReference type="GO" id="GO:0051539">
    <property type="term" value="F:4 iron, 4 sulfur cluster binding"/>
    <property type="evidence" value="ECO:0007669"/>
    <property type="project" value="UniProtKB-KW"/>
</dbReference>
<dbReference type="GO" id="GO:0005506">
    <property type="term" value="F:iron ion binding"/>
    <property type="evidence" value="ECO:0007669"/>
    <property type="project" value="UniProtKB-UniRule"/>
</dbReference>
<dbReference type="GO" id="GO:0008137">
    <property type="term" value="F:NADH dehydrogenase (ubiquinone) activity"/>
    <property type="evidence" value="ECO:0007669"/>
    <property type="project" value="InterPro"/>
</dbReference>
<dbReference type="GO" id="GO:0050136">
    <property type="term" value="F:NADH:ubiquinone reductase (non-electrogenic) activity"/>
    <property type="evidence" value="ECO:0007669"/>
    <property type="project" value="UniProtKB-UniRule"/>
</dbReference>
<dbReference type="GO" id="GO:0048038">
    <property type="term" value="F:quinone binding"/>
    <property type="evidence" value="ECO:0007669"/>
    <property type="project" value="UniProtKB-KW"/>
</dbReference>
<dbReference type="GO" id="GO:0009060">
    <property type="term" value="P:aerobic respiration"/>
    <property type="evidence" value="ECO:0007669"/>
    <property type="project" value="TreeGrafter"/>
</dbReference>
<dbReference type="GO" id="GO:0015990">
    <property type="term" value="P:electron transport coupled proton transport"/>
    <property type="evidence" value="ECO:0007669"/>
    <property type="project" value="TreeGrafter"/>
</dbReference>
<dbReference type="FunFam" id="3.40.50.12280:FF:000001">
    <property type="entry name" value="NADH-quinone oxidoreductase subunit B 2"/>
    <property type="match status" value="1"/>
</dbReference>
<dbReference type="Gene3D" id="3.40.50.12280">
    <property type="match status" value="1"/>
</dbReference>
<dbReference type="HAMAP" id="MF_01356">
    <property type="entry name" value="NDH1_NuoB"/>
    <property type="match status" value="1"/>
</dbReference>
<dbReference type="InterPro" id="IPR006137">
    <property type="entry name" value="NADH_UbQ_OxRdtase-like_20kDa"/>
</dbReference>
<dbReference type="InterPro" id="IPR006138">
    <property type="entry name" value="NADH_UQ_OxRdtase_20Kd_su"/>
</dbReference>
<dbReference type="NCBIfam" id="TIGR01957">
    <property type="entry name" value="nuoB_fam"/>
    <property type="match status" value="1"/>
</dbReference>
<dbReference type="NCBIfam" id="NF005012">
    <property type="entry name" value="PRK06411.1"/>
    <property type="match status" value="1"/>
</dbReference>
<dbReference type="PANTHER" id="PTHR11995">
    <property type="entry name" value="NADH DEHYDROGENASE"/>
    <property type="match status" value="1"/>
</dbReference>
<dbReference type="PANTHER" id="PTHR11995:SF14">
    <property type="entry name" value="NADH DEHYDROGENASE [UBIQUINONE] IRON-SULFUR PROTEIN 7, MITOCHONDRIAL"/>
    <property type="match status" value="1"/>
</dbReference>
<dbReference type="Pfam" id="PF01058">
    <property type="entry name" value="Oxidored_q6"/>
    <property type="match status" value="1"/>
</dbReference>
<dbReference type="SUPFAM" id="SSF56770">
    <property type="entry name" value="HydA/Nqo6-like"/>
    <property type="match status" value="1"/>
</dbReference>
<dbReference type="PROSITE" id="PS01150">
    <property type="entry name" value="COMPLEX1_20K"/>
    <property type="match status" value="1"/>
</dbReference>
<feature type="chain" id="PRO_0000376144" description="NADH-quinone oxidoreductase subunit B">
    <location>
        <begin position="1"/>
        <end position="193"/>
    </location>
</feature>
<feature type="binding site" evidence="1">
    <location>
        <position position="72"/>
    </location>
    <ligand>
        <name>[4Fe-4S] cluster</name>
        <dbReference type="ChEBI" id="CHEBI:49883"/>
    </ligand>
</feature>
<feature type="binding site" evidence="1">
    <location>
        <position position="73"/>
    </location>
    <ligand>
        <name>[4Fe-4S] cluster</name>
        <dbReference type="ChEBI" id="CHEBI:49883"/>
    </ligand>
</feature>
<feature type="binding site" evidence="1">
    <location>
        <position position="137"/>
    </location>
    <ligand>
        <name>[4Fe-4S] cluster</name>
        <dbReference type="ChEBI" id="CHEBI:49883"/>
    </ligand>
</feature>
<feature type="binding site" evidence="1">
    <location>
        <position position="167"/>
    </location>
    <ligand>
        <name>[4Fe-4S] cluster</name>
        <dbReference type="ChEBI" id="CHEBI:49883"/>
    </ligand>
</feature>
<sequence>MGLVFNNSTIVAPQAKGIIDPNTSKLIGANDQFFQDMNAELSDKGFLVTSVDSLITWARTGSLMWMSFGLACCAVEMMQCSMPHYDNERFGYAPRASPRQSDVMVVAGTLTNKMAPALRKVYDQMPEPRYVISMGSCANGGGYYHYSYSVVRGCDRIVPVDIYVPGCPPTAEALLYGILLLQKKIRRTGSIER</sequence>
<protein>
    <recommendedName>
        <fullName evidence="1">NADH-quinone oxidoreductase subunit B</fullName>
        <ecNumber evidence="1">7.1.1.-</ecNumber>
    </recommendedName>
    <alternativeName>
        <fullName evidence="1">NADH dehydrogenase I subunit B</fullName>
    </alternativeName>
    <alternativeName>
        <fullName evidence="1">NDH-1 subunit B</fullName>
    </alternativeName>
</protein>
<gene>
    <name evidence="1" type="primary">nuoB</name>
    <name type="ordered locus">BARBAKC583_0779</name>
</gene>
<reference key="1">
    <citation type="submission" date="2006-12" db="EMBL/GenBank/DDBJ databases">
        <authorList>
            <person name="Hendrix L."/>
            <person name="Mohamoud Y."/>
            <person name="Radune D."/>
            <person name="Shvartsbeyn A."/>
            <person name="Daugherty S."/>
            <person name="Dodson R."/>
            <person name="Durkin A.S."/>
            <person name="Harkins D."/>
            <person name="Huot H."/>
            <person name="Kothari S.P."/>
            <person name="Madupu R."/>
            <person name="Li J."/>
            <person name="Nelson W.C."/>
            <person name="Shrivastava S."/>
            <person name="Giglio M.G."/>
            <person name="Haft D."/>
            <person name="Selengut J."/>
            <person name="Fraser-Ligget C."/>
            <person name="Seshadri R."/>
        </authorList>
    </citation>
    <scope>NUCLEOTIDE SEQUENCE [LARGE SCALE GENOMIC DNA]</scope>
    <source>
        <strain>ATCC 35685 / KC583 / Herrer 020/F12,63</strain>
    </source>
</reference>
<proteinExistence type="inferred from homology"/>
<organism>
    <name type="scientific">Bartonella bacilliformis (strain ATCC 35685 / KC583 / Herrer 020/F12,63)</name>
    <dbReference type="NCBI Taxonomy" id="360095"/>
    <lineage>
        <taxon>Bacteria</taxon>
        <taxon>Pseudomonadati</taxon>
        <taxon>Pseudomonadota</taxon>
        <taxon>Alphaproteobacteria</taxon>
        <taxon>Hyphomicrobiales</taxon>
        <taxon>Bartonellaceae</taxon>
        <taxon>Bartonella</taxon>
    </lineage>
</organism>
<comment type="function">
    <text evidence="1">NDH-1 shuttles electrons from NADH, via FMN and iron-sulfur (Fe-S) centers, to quinones in the respiratory chain. The immediate electron acceptor for the enzyme in this species is believed to be ubiquinone. Couples the redox reaction to proton translocation (for every two electrons transferred, four hydrogen ions are translocated across the cytoplasmic membrane), and thus conserves the redox energy in a proton gradient.</text>
</comment>
<comment type="catalytic activity">
    <reaction evidence="1">
        <text>a quinone + NADH + 5 H(+)(in) = a quinol + NAD(+) + 4 H(+)(out)</text>
        <dbReference type="Rhea" id="RHEA:57888"/>
        <dbReference type="ChEBI" id="CHEBI:15378"/>
        <dbReference type="ChEBI" id="CHEBI:24646"/>
        <dbReference type="ChEBI" id="CHEBI:57540"/>
        <dbReference type="ChEBI" id="CHEBI:57945"/>
        <dbReference type="ChEBI" id="CHEBI:132124"/>
    </reaction>
</comment>
<comment type="cofactor">
    <cofactor evidence="1">
        <name>[4Fe-4S] cluster</name>
        <dbReference type="ChEBI" id="CHEBI:49883"/>
    </cofactor>
    <text evidence="1">Binds 1 [4Fe-4S] cluster.</text>
</comment>
<comment type="subunit">
    <text evidence="1">NDH-1 is composed of 14 different subunits. Subunits NuoB, C, D, E, F, and G constitute the peripheral sector of the complex.</text>
</comment>
<comment type="subcellular location">
    <subcellularLocation>
        <location evidence="1">Cell inner membrane</location>
        <topology evidence="1">Peripheral membrane protein</topology>
        <orientation evidence="1">Cytoplasmic side</orientation>
    </subcellularLocation>
</comment>
<comment type="similarity">
    <text evidence="1">Belongs to the complex I 20 kDa subunit family.</text>
</comment>
<evidence type="ECO:0000255" key="1">
    <source>
        <dbReference type="HAMAP-Rule" id="MF_01356"/>
    </source>
</evidence>
<accession>A1USW8</accession>
<keyword id="KW-0004">4Fe-4S</keyword>
<keyword id="KW-0997">Cell inner membrane</keyword>
<keyword id="KW-1003">Cell membrane</keyword>
<keyword id="KW-0408">Iron</keyword>
<keyword id="KW-0411">Iron-sulfur</keyword>
<keyword id="KW-0472">Membrane</keyword>
<keyword id="KW-0479">Metal-binding</keyword>
<keyword id="KW-0520">NAD</keyword>
<keyword id="KW-0874">Quinone</keyword>
<keyword id="KW-1278">Translocase</keyword>
<keyword id="KW-0813">Transport</keyword>
<keyword id="KW-0830">Ubiquinone</keyword>
<name>NUOB_BARBK</name>